<protein>
    <recommendedName>
        <fullName>Uncharacterized alpha-1,2-galactosyltransferase C1289.13c</fullName>
        <ecNumber>2.4.1.-</ecNumber>
    </recommendedName>
</protein>
<proteinExistence type="inferred from homology"/>
<organism>
    <name type="scientific">Schizosaccharomyces pombe (strain 972 / ATCC 24843)</name>
    <name type="common">Fission yeast</name>
    <dbReference type="NCBI Taxonomy" id="284812"/>
    <lineage>
        <taxon>Eukaryota</taxon>
        <taxon>Fungi</taxon>
        <taxon>Dikarya</taxon>
        <taxon>Ascomycota</taxon>
        <taxon>Taphrinomycotina</taxon>
        <taxon>Schizosaccharomycetes</taxon>
        <taxon>Schizosaccharomycetales</taxon>
        <taxon>Schizosaccharomycetaceae</taxon>
        <taxon>Schizosaccharomyces</taxon>
    </lineage>
</organism>
<accession>O94622</accession>
<reference key="1">
    <citation type="journal article" date="2002" name="Nature">
        <title>The genome sequence of Schizosaccharomyces pombe.</title>
        <authorList>
            <person name="Wood V."/>
            <person name="Gwilliam R."/>
            <person name="Rajandream M.A."/>
            <person name="Lyne M.H."/>
            <person name="Lyne R."/>
            <person name="Stewart A."/>
            <person name="Sgouros J.G."/>
            <person name="Peat N."/>
            <person name="Hayles J."/>
            <person name="Baker S.G."/>
            <person name="Basham D."/>
            <person name="Bowman S."/>
            <person name="Brooks K."/>
            <person name="Brown D."/>
            <person name="Brown S."/>
            <person name="Chillingworth T."/>
            <person name="Churcher C.M."/>
            <person name="Collins M."/>
            <person name="Connor R."/>
            <person name="Cronin A."/>
            <person name="Davis P."/>
            <person name="Feltwell T."/>
            <person name="Fraser A."/>
            <person name="Gentles S."/>
            <person name="Goble A."/>
            <person name="Hamlin N."/>
            <person name="Harris D.E."/>
            <person name="Hidalgo J."/>
            <person name="Hodgson G."/>
            <person name="Holroyd S."/>
            <person name="Hornsby T."/>
            <person name="Howarth S."/>
            <person name="Huckle E.J."/>
            <person name="Hunt S."/>
            <person name="Jagels K."/>
            <person name="James K.D."/>
            <person name="Jones L."/>
            <person name="Jones M."/>
            <person name="Leather S."/>
            <person name="McDonald S."/>
            <person name="McLean J."/>
            <person name="Mooney P."/>
            <person name="Moule S."/>
            <person name="Mungall K.L."/>
            <person name="Murphy L.D."/>
            <person name="Niblett D."/>
            <person name="Odell C."/>
            <person name="Oliver K."/>
            <person name="O'Neil S."/>
            <person name="Pearson D."/>
            <person name="Quail M.A."/>
            <person name="Rabbinowitsch E."/>
            <person name="Rutherford K.M."/>
            <person name="Rutter S."/>
            <person name="Saunders D."/>
            <person name="Seeger K."/>
            <person name="Sharp S."/>
            <person name="Skelton J."/>
            <person name="Simmonds M.N."/>
            <person name="Squares R."/>
            <person name="Squares S."/>
            <person name="Stevens K."/>
            <person name="Taylor K."/>
            <person name="Taylor R.G."/>
            <person name="Tivey A."/>
            <person name="Walsh S.V."/>
            <person name="Warren T."/>
            <person name="Whitehead S."/>
            <person name="Woodward J.R."/>
            <person name="Volckaert G."/>
            <person name="Aert R."/>
            <person name="Robben J."/>
            <person name="Grymonprez B."/>
            <person name="Weltjens I."/>
            <person name="Vanstreels E."/>
            <person name="Rieger M."/>
            <person name="Schaefer M."/>
            <person name="Mueller-Auer S."/>
            <person name="Gabel C."/>
            <person name="Fuchs M."/>
            <person name="Duesterhoeft A."/>
            <person name="Fritzc C."/>
            <person name="Holzer E."/>
            <person name="Moestl D."/>
            <person name="Hilbert H."/>
            <person name="Borzym K."/>
            <person name="Langer I."/>
            <person name="Beck A."/>
            <person name="Lehrach H."/>
            <person name="Reinhardt R."/>
            <person name="Pohl T.M."/>
            <person name="Eger P."/>
            <person name="Zimmermann W."/>
            <person name="Wedler H."/>
            <person name="Wambutt R."/>
            <person name="Purnelle B."/>
            <person name="Goffeau A."/>
            <person name="Cadieu E."/>
            <person name="Dreano S."/>
            <person name="Gloux S."/>
            <person name="Lelaure V."/>
            <person name="Mottier S."/>
            <person name="Galibert F."/>
            <person name="Aves S.J."/>
            <person name="Xiang Z."/>
            <person name="Hunt C."/>
            <person name="Moore K."/>
            <person name="Hurst S.M."/>
            <person name="Lucas M."/>
            <person name="Rochet M."/>
            <person name="Gaillardin C."/>
            <person name="Tallada V.A."/>
            <person name="Garzon A."/>
            <person name="Thode G."/>
            <person name="Daga R.R."/>
            <person name="Cruzado L."/>
            <person name="Jimenez J."/>
            <person name="Sanchez M."/>
            <person name="del Rey F."/>
            <person name="Benito J."/>
            <person name="Dominguez A."/>
            <person name="Revuelta J.L."/>
            <person name="Moreno S."/>
            <person name="Armstrong J."/>
            <person name="Forsburg S.L."/>
            <person name="Cerutti L."/>
            <person name="Lowe T."/>
            <person name="McCombie W.R."/>
            <person name="Paulsen I."/>
            <person name="Potashkin J."/>
            <person name="Shpakovski G.V."/>
            <person name="Ussery D."/>
            <person name="Barrell B.G."/>
            <person name="Nurse P."/>
        </authorList>
    </citation>
    <scope>NUCLEOTIDE SEQUENCE [LARGE SCALE GENOMIC DNA]</scope>
    <source>
        <strain>972 / ATCC 24843</strain>
    </source>
</reference>
<reference key="2">
    <citation type="journal article" date="2006" name="Nat. Biotechnol.">
        <title>ORFeome cloning and global analysis of protein localization in the fission yeast Schizosaccharomyces pombe.</title>
        <authorList>
            <person name="Matsuyama A."/>
            <person name="Arai R."/>
            <person name="Yashiroda Y."/>
            <person name="Shirai A."/>
            <person name="Kamata A."/>
            <person name="Sekido S."/>
            <person name="Kobayashi Y."/>
            <person name="Hashimoto A."/>
            <person name="Hamamoto M."/>
            <person name="Hiraoka Y."/>
            <person name="Horinouchi S."/>
            <person name="Yoshida M."/>
        </authorList>
    </citation>
    <scope>SUBCELLULAR LOCATION [LARGE SCALE ANALYSIS]</scope>
</reference>
<sequence length="375" mass="43118">MRWYSYVIPAVILSIIAISGVWWNATLGTRLDQKVQLFLNEHSSILNAVYETTTIVYTEPLHTSVSETITSTSFVTETTTVTPTVTATAQELSTLNPHPENSKIVLLMGSNAQNDPSSPLNPYIRTIIKNRRDYAERHGFKFEFLDLDEYKPSIGDKPAPWAKIPMIKNVIRKYPDAEWVWWLDHDALIMNRDLNLVDHILKHEKLNSLLLRDTEYFSGFGIDSEGFRTPKNQDPDDIHFIIAQDFNGINAGSFLIRNSEVGTWMLDFWNEPLYKEHNGVFVEQQALSHMIYSHPIVHKHVGLVTLRSINAYDSSDPAWGYEDGDLCVHFAGCFVFQTCAQNFEKYGKIITEKQGHDWFDPSEKEYIEQRLFPQP</sequence>
<name>YBKD_SCHPO</name>
<feature type="chain" id="PRO_0000339340" description="Uncharacterized alpha-1,2-galactosyltransferase C1289.13c">
    <location>
        <begin position="1"/>
        <end position="375"/>
    </location>
</feature>
<feature type="topological domain" description="Cytoplasmic" evidence="1">
    <location>
        <begin position="1"/>
        <end position="2"/>
    </location>
</feature>
<feature type="transmembrane region" description="Helical; Signal-anchor for type II membrane protein" evidence="1">
    <location>
        <begin position="3"/>
        <end position="23"/>
    </location>
</feature>
<feature type="topological domain" description="Lumenal" evidence="1">
    <location>
        <begin position="24"/>
        <end position="375"/>
    </location>
</feature>
<keyword id="KW-0256">Endoplasmic reticulum</keyword>
<keyword id="KW-0328">Glycosyltransferase</keyword>
<keyword id="KW-0333">Golgi apparatus</keyword>
<keyword id="KW-0472">Membrane</keyword>
<keyword id="KW-1185">Reference proteome</keyword>
<keyword id="KW-0735">Signal-anchor</keyword>
<keyword id="KW-0808">Transferase</keyword>
<keyword id="KW-0812">Transmembrane</keyword>
<keyword id="KW-1133">Transmembrane helix</keyword>
<evidence type="ECO:0000255" key="1"/>
<evidence type="ECO:0000269" key="2">
    <source>
    </source>
</evidence>
<evidence type="ECO:0000305" key="3"/>
<dbReference type="EC" id="2.4.1.-"/>
<dbReference type="EMBL" id="CU329671">
    <property type="protein sequence ID" value="CAB38693.1"/>
    <property type="molecule type" value="Genomic_DNA"/>
</dbReference>
<dbReference type="PIR" id="T39364">
    <property type="entry name" value="T39364"/>
</dbReference>
<dbReference type="SMR" id="O94622"/>
<dbReference type="BioGRID" id="276545">
    <property type="interactions" value="60"/>
</dbReference>
<dbReference type="FunCoup" id="O94622">
    <property type="interactions" value="116"/>
</dbReference>
<dbReference type="STRING" id="284812.O94622"/>
<dbReference type="CAZy" id="GT34">
    <property type="family name" value="Glycosyltransferase Family 34"/>
</dbReference>
<dbReference type="PaxDb" id="4896-SPBC1289.13c.1"/>
<dbReference type="EnsemblFungi" id="SPBC1289.13c.1">
    <property type="protein sequence ID" value="SPBC1289.13c.1:pep"/>
    <property type="gene ID" value="SPBC1289.13c"/>
</dbReference>
<dbReference type="KEGG" id="spo:2540001"/>
<dbReference type="PomBase" id="SPBC1289.13c"/>
<dbReference type="VEuPathDB" id="FungiDB:SPBC1289.13c"/>
<dbReference type="eggNOG" id="KOG4748">
    <property type="taxonomic scope" value="Eukaryota"/>
</dbReference>
<dbReference type="HOGENOM" id="CLU_045726_0_0_1"/>
<dbReference type="InParanoid" id="O94622"/>
<dbReference type="PhylomeDB" id="O94622"/>
<dbReference type="PRO" id="PR:O94622"/>
<dbReference type="Proteomes" id="UP000002485">
    <property type="component" value="Chromosome II"/>
</dbReference>
<dbReference type="GO" id="GO:0005783">
    <property type="term" value="C:endoplasmic reticulum"/>
    <property type="evidence" value="ECO:0007005"/>
    <property type="project" value="PomBase"/>
</dbReference>
<dbReference type="GO" id="GO:0005789">
    <property type="term" value="C:endoplasmic reticulum membrane"/>
    <property type="evidence" value="ECO:0007669"/>
    <property type="project" value="UniProtKB-SubCell"/>
</dbReference>
<dbReference type="GO" id="GO:0005794">
    <property type="term" value="C:Golgi apparatus"/>
    <property type="evidence" value="ECO:0007005"/>
    <property type="project" value="PomBase"/>
</dbReference>
<dbReference type="GO" id="GO:0000139">
    <property type="term" value="C:Golgi membrane"/>
    <property type="evidence" value="ECO:0000318"/>
    <property type="project" value="GO_Central"/>
</dbReference>
<dbReference type="GO" id="GO:0031278">
    <property type="term" value="F:alpha-1,2-galactosyltransferase activity"/>
    <property type="evidence" value="ECO:0000269"/>
    <property type="project" value="PomBase"/>
</dbReference>
<dbReference type="GO" id="GO:0006487">
    <property type="term" value="P:protein N-linked glycosylation"/>
    <property type="evidence" value="ECO:0000315"/>
    <property type="project" value="PomBase"/>
</dbReference>
<dbReference type="GO" id="GO:0006493">
    <property type="term" value="P:protein O-linked glycosylation"/>
    <property type="evidence" value="ECO:0000269"/>
    <property type="project" value="PomBase"/>
</dbReference>
<dbReference type="Gene3D" id="3.90.550.10">
    <property type="entry name" value="Spore Coat Polysaccharide Biosynthesis Protein SpsA, Chain A"/>
    <property type="match status" value="1"/>
</dbReference>
<dbReference type="InterPro" id="IPR008630">
    <property type="entry name" value="Glyco_trans_34"/>
</dbReference>
<dbReference type="InterPro" id="IPR029044">
    <property type="entry name" value="Nucleotide-diphossugar_trans"/>
</dbReference>
<dbReference type="PANTHER" id="PTHR31306:SF4">
    <property type="entry name" value="ALPHA-1,2-GALACTOSYLTRANSFERASE"/>
    <property type="match status" value="1"/>
</dbReference>
<dbReference type="PANTHER" id="PTHR31306">
    <property type="entry name" value="ALPHA-1,6-MANNOSYLTRANSFERASE MNN11-RELATED"/>
    <property type="match status" value="1"/>
</dbReference>
<dbReference type="Pfam" id="PF05637">
    <property type="entry name" value="Glyco_transf_34"/>
    <property type="match status" value="1"/>
</dbReference>
<dbReference type="SUPFAM" id="SSF53448">
    <property type="entry name" value="Nucleotide-diphospho-sugar transferases"/>
    <property type="match status" value="1"/>
</dbReference>
<gene>
    <name type="ORF">SPBC1289.13c</name>
</gene>
<comment type="subcellular location">
    <subcellularLocation>
        <location evidence="2">Endoplasmic reticulum membrane</location>
        <topology evidence="2">Single-pass type II membrane protein</topology>
    </subcellularLocation>
    <subcellularLocation>
        <location evidence="2">Golgi apparatus membrane</location>
        <topology evidence="2">Single-pass type II membrane protein</topology>
    </subcellularLocation>
</comment>
<comment type="similarity">
    <text evidence="3">Belongs to the glycosyltransferase 34 family.</text>
</comment>